<accession>Q9FKV2</accession>
<organism>
    <name type="scientific">Arabidopsis thaliana</name>
    <name type="common">Mouse-ear cress</name>
    <dbReference type="NCBI Taxonomy" id="3702"/>
    <lineage>
        <taxon>Eukaryota</taxon>
        <taxon>Viridiplantae</taxon>
        <taxon>Streptophyta</taxon>
        <taxon>Embryophyta</taxon>
        <taxon>Tracheophyta</taxon>
        <taxon>Spermatophyta</taxon>
        <taxon>Magnoliopsida</taxon>
        <taxon>eudicotyledons</taxon>
        <taxon>Gunneridae</taxon>
        <taxon>Pentapetalae</taxon>
        <taxon>rosids</taxon>
        <taxon>malvids</taxon>
        <taxon>Brassicales</taxon>
        <taxon>Brassicaceae</taxon>
        <taxon>Camelineae</taxon>
        <taxon>Arabidopsis</taxon>
    </lineage>
</organism>
<proteinExistence type="evidence at transcript level"/>
<name>BBE23_ARATH</name>
<gene>
    <name evidence="8" type="ordered locus">At5g44360</name>
    <name evidence="9" type="ORF">K9L2.15</name>
</gene>
<dbReference type="EC" id="1.1.1.-" evidence="1"/>
<dbReference type="EMBL" id="AB011475">
    <property type="protein sequence ID" value="BAB10121.1"/>
    <property type="molecule type" value="Genomic_DNA"/>
</dbReference>
<dbReference type="EMBL" id="CP002688">
    <property type="protein sequence ID" value="AED95101.1"/>
    <property type="molecule type" value="Genomic_DNA"/>
</dbReference>
<dbReference type="RefSeq" id="NP_199249.1">
    <property type="nucleotide sequence ID" value="NM_123803.2"/>
</dbReference>
<dbReference type="SMR" id="Q9FKV2"/>
<dbReference type="FunCoup" id="Q9FKV2">
    <property type="interactions" value="5"/>
</dbReference>
<dbReference type="STRING" id="3702.Q9FKV2"/>
<dbReference type="GlyGen" id="Q9FKV2">
    <property type="glycosylation" value="3 sites"/>
</dbReference>
<dbReference type="PaxDb" id="3702-AT5G44360.1"/>
<dbReference type="ProteomicsDB" id="241201"/>
<dbReference type="EnsemblPlants" id="AT5G44360.1">
    <property type="protein sequence ID" value="AT5G44360.1"/>
    <property type="gene ID" value="AT5G44360"/>
</dbReference>
<dbReference type="GeneID" id="834462"/>
<dbReference type="Gramene" id="AT5G44360.1">
    <property type="protein sequence ID" value="AT5G44360.1"/>
    <property type="gene ID" value="AT5G44360"/>
</dbReference>
<dbReference type="KEGG" id="ath:AT5G44360"/>
<dbReference type="Araport" id="AT5G44360"/>
<dbReference type="TAIR" id="AT5G44360">
    <property type="gene designation" value="ATBBE23"/>
</dbReference>
<dbReference type="eggNOG" id="ENOG502QVGN">
    <property type="taxonomic scope" value="Eukaryota"/>
</dbReference>
<dbReference type="HOGENOM" id="CLU_018354_6_0_1"/>
<dbReference type="InParanoid" id="Q9FKV2"/>
<dbReference type="PhylomeDB" id="Q9FKV2"/>
<dbReference type="PRO" id="PR:Q9FKV2"/>
<dbReference type="Proteomes" id="UP000006548">
    <property type="component" value="Chromosome 5"/>
</dbReference>
<dbReference type="ExpressionAtlas" id="Q9FKV2">
    <property type="expression patterns" value="baseline and differential"/>
</dbReference>
<dbReference type="GO" id="GO:0005576">
    <property type="term" value="C:extracellular region"/>
    <property type="evidence" value="ECO:0007669"/>
    <property type="project" value="UniProtKB-KW"/>
</dbReference>
<dbReference type="GO" id="GO:0009505">
    <property type="term" value="C:plant-type cell wall"/>
    <property type="evidence" value="ECO:0000314"/>
    <property type="project" value="UniProtKB"/>
</dbReference>
<dbReference type="GO" id="GO:0071949">
    <property type="term" value="F:FAD binding"/>
    <property type="evidence" value="ECO:0007669"/>
    <property type="project" value="InterPro"/>
</dbReference>
<dbReference type="GO" id="GO:0016491">
    <property type="term" value="F:oxidoreductase activity"/>
    <property type="evidence" value="ECO:0007669"/>
    <property type="project" value="UniProtKB-KW"/>
</dbReference>
<dbReference type="Gene3D" id="3.30.465.10">
    <property type="match status" value="1"/>
</dbReference>
<dbReference type="Gene3D" id="3.40.462.20">
    <property type="match status" value="1"/>
</dbReference>
<dbReference type="Gene3D" id="3.30.43.10">
    <property type="entry name" value="Uridine Diphospho-n-acetylenolpyruvylglucosamine Reductase, domain 2"/>
    <property type="match status" value="1"/>
</dbReference>
<dbReference type="InterPro" id="IPR012951">
    <property type="entry name" value="BBE"/>
</dbReference>
<dbReference type="InterPro" id="IPR016166">
    <property type="entry name" value="FAD-bd_PCMH"/>
</dbReference>
<dbReference type="InterPro" id="IPR036318">
    <property type="entry name" value="FAD-bd_PCMH-like_sf"/>
</dbReference>
<dbReference type="InterPro" id="IPR016167">
    <property type="entry name" value="FAD-bd_PCMH_sub1"/>
</dbReference>
<dbReference type="InterPro" id="IPR016169">
    <property type="entry name" value="FAD-bd_PCMH_sub2"/>
</dbReference>
<dbReference type="InterPro" id="IPR006094">
    <property type="entry name" value="Oxid_FAD_bind_N"/>
</dbReference>
<dbReference type="InterPro" id="IPR006093">
    <property type="entry name" value="Oxy_OxRdtase_FAD_BS"/>
</dbReference>
<dbReference type="PANTHER" id="PTHR32448">
    <property type="entry name" value="OS08G0158400 PROTEIN"/>
    <property type="match status" value="1"/>
</dbReference>
<dbReference type="Pfam" id="PF08031">
    <property type="entry name" value="BBE"/>
    <property type="match status" value="1"/>
</dbReference>
<dbReference type="Pfam" id="PF01565">
    <property type="entry name" value="FAD_binding_4"/>
    <property type="match status" value="1"/>
</dbReference>
<dbReference type="SUPFAM" id="SSF56176">
    <property type="entry name" value="FAD-binding/transporter-associated domain-like"/>
    <property type="match status" value="1"/>
</dbReference>
<dbReference type="PROSITE" id="PS51387">
    <property type="entry name" value="FAD_PCMH"/>
    <property type="match status" value="1"/>
</dbReference>
<dbReference type="PROSITE" id="PS00862">
    <property type="entry name" value="OX2_COVAL_FAD"/>
    <property type="match status" value="1"/>
</dbReference>
<comment type="cofactor">
    <cofactor evidence="1">
        <name>FAD</name>
        <dbReference type="ChEBI" id="CHEBI:57692"/>
    </cofactor>
    <text evidence="1">Binds 1 FAD per subunit in a bicovalent manner.</text>
</comment>
<comment type="subcellular location">
    <subcellularLocation>
        <location evidence="5">Secreted</location>
        <location evidence="5">Cell wall</location>
    </subcellularLocation>
</comment>
<comment type="tissue specificity">
    <text evidence="5">Accumulates in cell walls of etiolated hypocotyls.</text>
</comment>
<comment type="PTM">
    <text evidence="1">The FAD cofactor is bound via a bicovalent 6-S-cysteinyl, 8alpha-N1-histidyl FAD linkage.</text>
</comment>
<comment type="similarity">
    <text evidence="7">Belongs to the oxygen-dependent FAD-linked oxidoreductase family.</text>
</comment>
<sequence length="532" mass="60499">MRTLEAFALSLFLVFLVKWVNSDSSSSPSKDQFLSCMSTHSDSSFINPKSFIHKPDSRVYTDFSQSLISQNYRFLTLNFTSQKPILIVTPRTDTEIQRSLLCSRKLGVKVRTKSGGHDYEGLSYLSLHSPFIILDLVNVRSIEINLADETAWVGAGATIGELYYKIAKSSKIHGFPAGTCPSVGVGGHFSGGGFGAMMRKHGLAADNVVDARFVDANGRIYNSRREMGEDLFWAIRGGGAASFGVVLSWKVKLVRVPEKVTCFRRNLPLTQNMTKIVHRWQQIAAELDDNLFIRVIVSISGGSVQTTFQANYLGGIDKLIPLMNQKFPELGLTFQDCSEMTWIDSIMYFNWKKGQPLETLLDRGQRYNDLYFKAKSDFVKNPIPEIGLEGIWTRFHEVESPIMIMEPLGGKMYEIGETETPFPHRRGNLYNIQYMVKWRLKDIGVMEKHVTWMRLLYRYMRVYVSASPRGAYLNYRDLDLGMNRGVNTSFEDAKLWGFRYFGSNFKRLAIVKGKIDPTNFFRNEQSVPPLIV</sequence>
<keyword id="KW-0134">Cell wall</keyword>
<keyword id="KW-1015">Disulfide bond</keyword>
<keyword id="KW-0274">FAD</keyword>
<keyword id="KW-0285">Flavoprotein</keyword>
<keyword id="KW-0325">Glycoprotein</keyword>
<keyword id="KW-0547">Nucleotide-binding</keyword>
<keyword id="KW-0560">Oxidoreductase</keyword>
<keyword id="KW-1185">Reference proteome</keyword>
<keyword id="KW-0964">Secreted</keyword>
<keyword id="KW-0732">Signal</keyword>
<feature type="signal peptide" evidence="2">
    <location>
        <begin position="1"/>
        <end position="22"/>
    </location>
</feature>
<feature type="chain" id="PRO_5008179960" description="Berberine bridge enzyme-like 23">
    <location>
        <begin position="23"/>
        <end position="532"/>
    </location>
</feature>
<feature type="domain" description="FAD-binding PCMH-type" evidence="4">
    <location>
        <begin position="80"/>
        <end position="256"/>
    </location>
</feature>
<feature type="glycosylation site" description="N-linked (GlcNAc...) asparagine" evidence="3">
    <location>
        <position position="78"/>
    </location>
</feature>
<feature type="glycosylation site" description="N-linked (GlcNAc...) asparagine" evidence="3">
    <location>
        <position position="272"/>
    </location>
</feature>
<feature type="glycosylation site" description="N-linked (GlcNAc...) asparagine" evidence="3">
    <location>
        <position position="487"/>
    </location>
</feature>
<feature type="disulfide bond" evidence="1">
    <location>
        <begin position="36"/>
        <end position="102"/>
    </location>
</feature>
<feature type="cross-link" description="6-(S-cysteinyl)-8alpha-(pros-histidyl)-FAD (His-Cys)" evidence="1">
    <location>
        <begin position="117"/>
        <end position="180"/>
    </location>
</feature>
<evidence type="ECO:0000250" key="1">
    <source>
        <dbReference type="UniProtKB" id="O64743"/>
    </source>
</evidence>
<evidence type="ECO:0000255" key="2"/>
<evidence type="ECO:0000255" key="3">
    <source>
        <dbReference type="PROSITE-ProRule" id="PRU00498"/>
    </source>
</evidence>
<evidence type="ECO:0000255" key="4">
    <source>
        <dbReference type="PROSITE-ProRule" id="PRU00718"/>
    </source>
</evidence>
<evidence type="ECO:0000269" key="5">
    <source>
    </source>
</evidence>
<evidence type="ECO:0000303" key="6">
    <source>
    </source>
</evidence>
<evidence type="ECO:0000305" key="7"/>
<evidence type="ECO:0000312" key="8">
    <source>
        <dbReference type="Araport" id="AT5G44360"/>
    </source>
</evidence>
<evidence type="ECO:0000312" key="9">
    <source>
        <dbReference type="EMBL" id="BAB10121.1"/>
    </source>
</evidence>
<protein>
    <recommendedName>
        <fullName evidence="6">Berberine bridge enzyme-like 23</fullName>
        <shortName evidence="6">AtBBE-like 23</shortName>
        <ecNumber evidence="1">1.1.1.-</ecNumber>
    </recommendedName>
</protein>
<reference key="1">
    <citation type="journal article" date="1998" name="DNA Res.">
        <title>Structural analysis of Arabidopsis thaliana chromosome 5. V. Sequence features of the regions of 1,381,565 bp covered by twenty one physically assigned P1 and TAC clones.</title>
        <authorList>
            <person name="Kaneko T."/>
            <person name="Kotani H."/>
            <person name="Nakamura Y."/>
            <person name="Sato S."/>
            <person name="Asamizu E."/>
            <person name="Miyajima N."/>
            <person name="Tabata S."/>
        </authorList>
    </citation>
    <scope>NUCLEOTIDE SEQUENCE [LARGE SCALE GENOMIC DNA]</scope>
    <source>
        <strain>cv. Columbia</strain>
    </source>
</reference>
<reference key="2">
    <citation type="journal article" date="2017" name="Plant J.">
        <title>Araport11: a complete reannotation of the Arabidopsis thaliana reference genome.</title>
        <authorList>
            <person name="Cheng C.Y."/>
            <person name="Krishnakumar V."/>
            <person name="Chan A.P."/>
            <person name="Thibaud-Nissen F."/>
            <person name="Schobel S."/>
            <person name="Town C.D."/>
        </authorList>
    </citation>
    <scope>GENOME REANNOTATION</scope>
    <source>
        <strain>cv. Columbia</strain>
    </source>
</reference>
<reference key="3">
    <citation type="journal article" date="2008" name="BMC Plant Biol.">
        <title>A new picture of cell wall protein dynamics in elongating cells of Arabidopsis thaliana: confirmed actors and newcomers.</title>
        <authorList>
            <person name="Irshad M."/>
            <person name="Canut H."/>
            <person name="Borderies G."/>
            <person name="Pont-Lezica R."/>
            <person name="Jamet E."/>
        </authorList>
    </citation>
    <scope>SUBCELLULAR LOCATION</scope>
    <scope>TISSUE SPECIFICITY</scope>
</reference>
<reference key="4">
    <citation type="journal article" date="2015" name="J. Biol. Chem.">
        <title>Oxidation of monolignols by members of the berberine bridge enzyme family suggests a role in plant cell wall metabolism.</title>
        <authorList>
            <person name="Daniel B."/>
            <person name="Pavkov-Keller T."/>
            <person name="Steiner B."/>
            <person name="Dordic A."/>
            <person name="Gutmann A."/>
            <person name="Nidetzky B."/>
            <person name="Sensen C.W."/>
            <person name="van der Graaff E."/>
            <person name="Wallner S."/>
            <person name="Gruber K."/>
            <person name="Macheroux P."/>
        </authorList>
    </citation>
    <scope>GENE FAMILY</scope>
    <scope>NOMENCLATURE</scope>
</reference>